<dbReference type="EMBL" id="BA000050">
    <property type="protein sequence ID" value="BAE57081.1"/>
    <property type="molecule type" value="Genomic_DNA"/>
</dbReference>
<dbReference type="RefSeq" id="XP_001819083.1">
    <property type="nucleotide sequence ID" value="XM_001819031.2"/>
</dbReference>
<dbReference type="SMR" id="Q2UMY4"/>
<dbReference type="STRING" id="510516.Q2UMY4"/>
<dbReference type="EnsemblFungi" id="BAE57081">
    <property type="protein sequence ID" value="BAE57081"/>
    <property type="gene ID" value="AO090001000572"/>
</dbReference>
<dbReference type="GeneID" id="5991054"/>
<dbReference type="KEGG" id="aor:AO090001000572"/>
<dbReference type="VEuPathDB" id="FungiDB:AO090001000572"/>
<dbReference type="HOGENOM" id="CLU_071330_3_0_1"/>
<dbReference type="OMA" id="DWPQLTI"/>
<dbReference type="OrthoDB" id="106806at5052"/>
<dbReference type="Proteomes" id="UP000006564">
    <property type="component" value="Chromosome 2"/>
</dbReference>
<dbReference type="GO" id="GO:0005741">
    <property type="term" value="C:mitochondrial outer membrane"/>
    <property type="evidence" value="ECO:0007669"/>
    <property type="project" value="UniProtKB-SubCell"/>
</dbReference>
<dbReference type="GO" id="GO:0051170">
    <property type="term" value="P:import into nucleus"/>
    <property type="evidence" value="ECO:0007669"/>
    <property type="project" value="TreeGrafter"/>
</dbReference>
<dbReference type="FunFam" id="3.40.50.720:FF:000366">
    <property type="entry name" value="Protein FMP52, mitochondrial"/>
    <property type="match status" value="1"/>
</dbReference>
<dbReference type="Gene3D" id="3.40.50.720">
    <property type="entry name" value="NAD(P)-binding Rossmann-like Domain"/>
    <property type="match status" value="1"/>
</dbReference>
<dbReference type="InterPro" id="IPR001509">
    <property type="entry name" value="Epimerase_deHydtase"/>
</dbReference>
<dbReference type="InterPro" id="IPR036291">
    <property type="entry name" value="NAD(P)-bd_dom_sf"/>
</dbReference>
<dbReference type="PANTHER" id="PTHR14097">
    <property type="entry name" value="OXIDOREDUCTASE HTATIP2"/>
    <property type="match status" value="1"/>
</dbReference>
<dbReference type="PANTHER" id="PTHR14097:SF7">
    <property type="entry name" value="OXIDOREDUCTASE HTATIP2"/>
    <property type="match status" value="1"/>
</dbReference>
<dbReference type="Pfam" id="PF01370">
    <property type="entry name" value="Epimerase"/>
    <property type="match status" value="1"/>
</dbReference>
<dbReference type="SUPFAM" id="SSF51735">
    <property type="entry name" value="NAD(P)-binding Rossmann-fold domains"/>
    <property type="match status" value="1"/>
</dbReference>
<organism>
    <name type="scientific">Aspergillus oryzae (strain ATCC 42149 / RIB 40)</name>
    <name type="common">Yellow koji mold</name>
    <dbReference type="NCBI Taxonomy" id="510516"/>
    <lineage>
        <taxon>Eukaryota</taxon>
        <taxon>Fungi</taxon>
        <taxon>Dikarya</taxon>
        <taxon>Ascomycota</taxon>
        <taxon>Pezizomycotina</taxon>
        <taxon>Eurotiomycetes</taxon>
        <taxon>Eurotiomycetidae</taxon>
        <taxon>Eurotiales</taxon>
        <taxon>Aspergillaceae</taxon>
        <taxon>Aspergillus</taxon>
        <taxon>Aspergillus subgen. Circumdati</taxon>
    </lineage>
</organism>
<keyword id="KW-0472">Membrane</keyword>
<keyword id="KW-0496">Mitochondrion</keyword>
<keyword id="KW-1000">Mitochondrion outer membrane</keyword>
<keyword id="KW-1185">Reference proteome</keyword>
<keyword id="KW-0809">Transit peptide</keyword>
<evidence type="ECO:0000250" key="1"/>
<evidence type="ECO:0000305" key="2"/>
<accession>Q2UMY4</accession>
<gene>
    <name type="primary">fmp521</name>
    <name type="ORF">AO090001000572</name>
</gene>
<sequence length="235" mass="24851">MANTALIGCTGMVGSFILNNLLAHPSVARVDTISRRTPQAASAAQTKLTTIVSDDTSRWASELSSLTPTPSIFFSAFATTRASAGGFENQYKIEHGLNVEMARAARDAGTKVYVLISSAGADKNAYFAYPRMKAEIEEDVKALGFERTVILRPGLIAGQREESRPMEAAIRCIAGFAGKIHSGLKDGWAQEADVIARAAVNAGLKALEGDVPTGSEKVWVLGGSDIIKYGAGSKN</sequence>
<reference key="1">
    <citation type="journal article" date="2005" name="Nature">
        <title>Genome sequencing and analysis of Aspergillus oryzae.</title>
        <authorList>
            <person name="Machida M."/>
            <person name="Asai K."/>
            <person name="Sano M."/>
            <person name="Tanaka T."/>
            <person name="Kumagai T."/>
            <person name="Terai G."/>
            <person name="Kusumoto K."/>
            <person name="Arima T."/>
            <person name="Akita O."/>
            <person name="Kashiwagi Y."/>
            <person name="Abe K."/>
            <person name="Gomi K."/>
            <person name="Horiuchi H."/>
            <person name="Kitamoto K."/>
            <person name="Kobayashi T."/>
            <person name="Takeuchi M."/>
            <person name="Denning D.W."/>
            <person name="Galagan J.E."/>
            <person name="Nierman W.C."/>
            <person name="Yu J."/>
            <person name="Archer D.B."/>
            <person name="Bennett J.W."/>
            <person name="Bhatnagar D."/>
            <person name="Cleveland T.E."/>
            <person name="Fedorova N.D."/>
            <person name="Gotoh O."/>
            <person name="Horikawa H."/>
            <person name="Hosoyama A."/>
            <person name="Ichinomiya M."/>
            <person name="Igarashi R."/>
            <person name="Iwashita K."/>
            <person name="Juvvadi P.R."/>
            <person name="Kato M."/>
            <person name="Kato Y."/>
            <person name="Kin T."/>
            <person name="Kokubun A."/>
            <person name="Maeda H."/>
            <person name="Maeyama N."/>
            <person name="Maruyama J."/>
            <person name="Nagasaki H."/>
            <person name="Nakajima T."/>
            <person name="Oda K."/>
            <person name="Okada K."/>
            <person name="Paulsen I."/>
            <person name="Sakamoto K."/>
            <person name="Sawano T."/>
            <person name="Takahashi M."/>
            <person name="Takase K."/>
            <person name="Terabayashi Y."/>
            <person name="Wortman J.R."/>
            <person name="Yamada O."/>
            <person name="Yamagata Y."/>
            <person name="Anazawa H."/>
            <person name="Hata Y."/>
            <person name="Koide Y."/>
            <person name="Komori T."/>
            <person name="Koyama Y."/>
            <person name="Minetoki T."/>
            <person name="Suharnan S."/>
            <person name="Tanaka A."/>
            <person name="Isono K."/>
            <person name="Kuhara S."/>
            <person name="Ogasawara N."/>
            <person name="Kikuchi H."/>
        </authorList>
    </citation>
    <scope>NUCLEOTIDE SEQUENCE [LARGE SCALE GENOMIC DNA]</scope>
    <source>
        <strain>ATCC 42149 / RIB 40</strain>
    </source>
</reference>
<proteinExistence type="inferred from homology"/>
<comment type="subcellular location">
    <subcellularLocation>
        <location evidence="1">Mitochondrion outer membrane</location>
        <topology evidence="1">Peripheral membrane protein</topology>
    </subcellularLocation>
</comment>
<comment type="similarity">
    <text evidence="2">Belongs to the FMP52 family.</text>
</comment>
<name>FM521_ASPOR</name>
<feature type="transit peptide" description="Mitochondrion">
    <location>
        <begin position="1"/>
        <end position="36"/>
    </location>
</feature>
<feature type="chain" id="PRO_0000301813" description="Protein fmp52-1, mitochondrial">
    <location>
        <begin position="37"/>
        <end position="235"/>
    </location>
</feature>
<protein>
    <recommendedName>
        <fullName>Protein fmp52-1, mitochondrial</fullName>
    </recommendedName>
</protein>